<comment type="function">
    <text evidence="1 4">Forms the helical nucleocapsid (NC) in a ratio of 1 N per 6 ribonucleotides, protecting the genome from nucleases (PubMed:33888861). The encapsidated genomic RNA serves as template for transcription and replication; encapsidation by N is coupled to RNA synthesis. Forms the encapsidation complex with the phosphoprotein protein P. Before encapsidation, the newly synthesized free N protein, so-called N0, is chaperoned by P (By similarity).</text>
</comment>
<comment type="subunit">
    <text evidence="1 2 5">Homomultimer; forms the nucleocapsid (By similarity). Binds to the viral genomic RNA (Ref.2). N0 interacts with the phosphoprotein (via N-terminus); this interaction allows P to chaperon N0 to avoid N polymerization before encapsidation (By similarity). Interacts as N-RNA template with the phosphoprotein (via C-terminus); this interaction positions the polymerase on the template (By similarity).</text>
</comment>
<comment type="subcellular location">
    <subcellularLocation>
        <location evidence="6">Virion</location>
    </subcellularLocation>
    <subcellularLocation>
        <location>Host cytoplasm</location>
    </subcellularLocation>
</comment>
<comment type="domain">
    <text evidence="1">Ncore is globular and carries regions required for self-assembly and RNA-binding. Ntail is an intrinsically disordered monomeric domain in the C-terminus.</text>
</comment>
<comment type="miscellaneous">
    <text evidence="6">Most abundant protein in the virion. Since the viral RNA genome consists of 15,383 bases,there are 2564 molecules per encapsidated genome.</text>
</comment>
<comment type="similarity">
    <text evidence="6">Belongs to the paramyxoviruses nucleocapsid family.</text>
</comment>
<organism>
    <name type="scientific">Sendai virus (strain Ohita)</name>
    <name type="common">SeV</name>
    <dbReference type="NCBI Taxonomy" id="302272"/>
    <lineage>
        <taxon>Viruses</taxon>
        <taxon>Riboviria</taxon>
        <taxon>Orthornavirae</taxon>
        <taxon>Negarnaviricota</taxon>
        <taxon>Haploviricotina</taxon>
        <taxon>Monjiviricetes</taxon>
        <taxon>Mononegavirales</taxon>
        <taxon>Paramyxoviridae</taxon>
        <taxon>Feraresvirinae</taxon>
        <taxon>Respirovirus</taxon>
        <taxon>Respirovirus muris</taxon>
    </lineage>
</organism>
<protein>
    <recommendedName>
        <fullName>Nucleoprotein</fullName>
    </recommendedName>
    <alternativeName>
        <fullName>Nucleocapsid protein</fullName>
        <shortName>NP</shortName>
        <shortName>Protein N</shortName>
    </alternativeName>
</protein>
<sequence>MAGLLSTFDTFSSRRSESINKSGGGAVIPGQRSTVSVFVLGPSVTDDADKLSIATTFLAHSLDTDKQHSQRGGFLVSLLAMAYSSPELYLTTNGVNADVKYVIYNIEKDPKRTKTDGFIVKTRDMEYERTTEWLFGPMVNKSPLFQGQRDAADPDTLLQIYGYPACLGAIIVQVWIVLVKAITSSAGLRKGFFNRLEAFRQDGTVKGALVFTGETVEGIGSVMRSQQSLVSLMVETLVTMNTARSDLTTLEKNIQIVGNYIRDAGLASFMNTIKYGVETKMAALTLSNLRPDINKLRSLIDTYLSKGPRAPFICILKDPVHGEFAPGNYPALWSYAMGVAVVQNKAMQQYVTGRTYLDMEMFLLGQAVAKDAESKISSALEDELGVTDTAKERLRHHLANLSGGDGAYHKPTGGGAIEVALDNADIDLEPEAHTDQDARGWGGDSGDRWARSMGSGHFITLHGAERLEEETNDEDVSDIERRIARRLAERRQEDATTHEDEGRNNGVDHDEEDDAAAAAGMGGI</sequence>
<gene>
    <name type="primary">N</name>
    <name type="synonym">NP</name>
</gene>
<name>NCAP_SENDO</name>
<proteinExistence type="evidence at protein level"/>
<reference key="1">
    <citation type="journal article" date="1997" name="J. Gen. Virol.">
        <title>Isolation of an avirulent mutant of Sendai virus with two amino acid mutations from a highly virulent field strain through adaptation to LLC-MK2 cells.</title>
        <authorList>
            <person name="Itoh M."/>
            <person name="Isegawa Y."/>
            <person name="Hotta H."/>
            <person name="Homma M."/>
        </authorList>
    </citation>
    <scope>NUCLEOTIDE SEQUENCE [GENOMIC RNA]</scope>
    <source>
        <strain>Isolate MVC11</strain>
    </source>
</reference>
<reference evidence="7" key="2">
    <citation type="submission" date="2020-03" db="PDB data bank">
        <title>structure of the nucleocapsid of sendai virus at 2.9 Angstroms resolution.</title>
        <authorList>
            <person name="Shen Q."/>
            <person name="Shan H."/>
            <person name="Zhang N."/>
        </authorList>
    </citation>
    <scope>STRUCTURE BY ELECTRON MICROSCOPY (2.90 ANGSTROMS) IN COMPLEX WITH RNA</scope>
    <scope>RNA-BINDING</scope>
</reference>
<reference key="3">
    <citation type="journal article" date="2021" name="Commun. Biol.">
        <title>Structure and assembly of double-headed Sendai virus nucleocapsids.</title>
        <authorList>
            <person name="Zhang N."/>
            <person name="Shan H."/>
            <person name="Liu M."/>
            <person name="Li T."/>
            <person name="Luo R."/>
            <person name="Yang L."/>
            <person name="Qi L."/>
            <person name="Chu X."/>
            <person name="Su X."/>
            <person name="Wang R."/>
            <person name="Liu Y."/>
            <person name="Sun W."/>
            <person name="Shen Q.T."/>
        </authorList>
    </citation>
    <scope>STRUCTURE BY ELECTRON MICROSCOPY (3.9 ANGSTROMS) OF THE NUCLEOCAPSID</scope>
    <scope>FUNCTION</scope>
    <scope>RNA-BINDING</scope>
</reference>
<organismHost>
    <name type="scientific">Cavia cutleri</name>
    <name type="common">Guinea pig</name>
    <dbReference type="NCBI Taxonomy" id="10144"/>
</organismHost>
<organismHost>
    <name type="scientific">Cricetidae sp.</name>
    <name type="common">Hamster</name>
    <dbReference type="NCBI Taxonomy" id="36483"/>
</organismHost>
<organismHost>
    <name type="scientific">Mus musculus</name>
    <name type="common">Mouse</name>
    <dbReference type="NCBI Taxonomy" id="10090"/>
</organismHost>
<organismHost>
    <name type="scientific">Rattus norvegicus</name>
    <name type="common">Rat</name>
    <dbReference type="NCBI Taxonomy" id="10116"/>
</organismHost>
<keyword id="KW-0002">3D-structure</keyword>
<keyword id="KW-0167">Capsid protein</keyword>
<keyword id="KW-1139">Helical capsid protein</keyword>
<keyword id="KW-1035">Host cytoplasm</keyword>
<keyword id="KW-1185">Reference proteome</keyword>
<keyword id="KW-0687">Ribonucleoprotein</keyword>
<keyword id="KW-0694">RNA-binding</keyword>
<keyword id="KW-0543">Viral nucleoprotein</keyword>
<keyword id="KW-0946">Virion</keyword>
<feature type="chain" id="PRO_0000142683" description="Nucleoprotein">
    <location>
        <begin position="1"/>
        <end position="524"/>
    </location>
</feature>
<feature type="region of interest" description="Ncore" evidence="1">
    <location>
        <begin position="1"/>
        <end position="404"/>
    </location>
</feature>
<feature type="region of interest" description="Ntail" evidence="1">
    <location>
        <begin position="405"/>
        <end position="524"/>
    </location>
</feature>
<feature type="region of interest" description="Homomultimerization" evidence="2">
    <location>
        <begin position="440"/>
        <end position="461"/>
    </location>
</feature>
<feature type="region of interest" description="Interaction with the phosphoprotein" evidence="2">
    <location>
        <begin position="462"/>
        <end position="471"/>
    </location>
</feature>
<feature type="region of interest" description="Disordered" evidence="3">
    <location>
        <begin position="487"/>
        <end position="524"/>
    </location>
</feature>
<feature type="compositionally biased region" description="Basic and acidic residues" evidence="3">
    <location>
        <begin position="487"/>
        <end position="508"/>
    </location>
</feature>
<feature type="binding site" evidence="4 5">
    <location>
        <position position="180"/>
    </location>
    <ligand>
        <name>RNA</name>
        <dbReference type="ChEBI" id="CHEBI:33697"/>
    </ligand>
</feature>
<feature type="binding site" evidence="5">
    <location>
        <position position="190"/>
    </location>
    <ligand>
        <name>RNA</name>
        <dbReference type="ChEBI" id="CHEBI:33697"/>
    </ligand>
</feature>
<feature type="binding site" evidence="4 5">
    <location>
        <position position="195"/>
    </location>
    <ligand>
        <name>RNA</name>
        <dbReference type="ChEBI" id="CHEBI:33697"/>
    </ligand>
</feature>
<feature type="binding site" evidence="5">
    <location>
        <position position="260"/>
    </location>
    <ligand>
        <name>RNA</name>
        <dbReference type="ChEBI" id="CHEBI:33697"/>
    </ligand>
</feature>
<feature type="binding site" evidence="5">
    <location>
        <position position="350"/>
    </location>
    <ligand>
        <name>RNA</name>
        <dbReference type="ChEBI" id="CHEBI:33697"/>
    </ligand>
</feature>
<feature type="binding site" evidence="4 5">
    <location>
        <position position="354"/>
    </location>
    <ligand>
        <name>RNA</name>
        <dbReference type="ChEBI" id="CHEBI:33697"/>
    </ligand>
</feature>
<feature type="binding site" evidence="5">
    <location>
        <position position="356"/>
    </location>
    <ligand>
        <name>RNA</name>
        <dbReference type="ChEBI" id="CHEBI:33697"/>
    </ligand>
</feature>
<feature type="helix" evidence="8">
    <location>
        <begin position="6"/>
        <end position="9"/>
    </location>
</feature>
<feature type="helix" evidence="8">
    <location>
        <begin position="11"/>
        <end position="19"/>
    </location>
</feature>
<feature type="strand" evidence="8">
    <location>
        <begin position="33"/>
        <end position="40"/>
    </location>
</feature>
<feature type="helix" evidence="8">
    <location>
        <begin position="47"/>
        <end position="62"/>
    </location>
</feature>
<feature type="strand" evidence="8">
    <location>
        <begin position="64"/>
        <end position="66"/>
    </location>
</feature>
<feature type="helix" evidence="8">
    <location>
        <begin position="68"/>
        <end position="80"/>
    </location>
</feature>
<feature type="strand" evidence="8">
    <location>
        <begin position="83"/>
        <end position="85"/>
    </location>
</feature>
<feature type="helix" evidence="8">
    <location>
        <begin position="86"/>
        <end position="93"/>
    </location>
</feature>
<feature type="strand" evidence="8">
    <location>
        <begin position="97"/>
        <end position="108"/>
    </location>
</feature>
<feature type="turn" evidence="8">
    <location>
        <begin position="114"/>
        <end position="117"/>
    </location>
</feature>
<feature type="strand" evidence="8">
    <location>
        <begin position="118"/>
        <end position="122"/>
    </location>
</feature>
<feature type="strand" evidence="8">
    <location>
        <begin position="125"/>
        <end position="128"/>
    </location>
</feature>
<feature type="helix" evidence="8">
    <location>
        <begin position="129"/>
        <end position="135"/>
    </location>
</feature>
<feature type="helix" evidence="8">
    <location>
        <begin position="154"/>
        <end position="160"/>
    </location>
</feature>
<feature type="helix" evidence="8">
    <location>
        <begin position="163"/>
        <end position="181"/>
    </location>
</feature>
<feature type="helix" evidence="8">
    <location>
        <begin position="188"/>
        <end position="202"/>
    </location>
</feature>
<feature type="helix" evidence="8">
    <location>
        <begin position="207"/>
        <end position="209"/>
    </location>
</feature>
<feature type="helix" evidence="8">
    <location>
        <begin position="213"/>
        <end position="225"/>
    </location>
</feature>
<feature type="helix" evidence="8">
    <location>
        <begin position="227"/>
        <end position="239"/>
    </location>
</feature>
<feature type="strand" evidence="8">
    <location>
        <begin position="243"/>
        <end position="245"/>
    </location>
</feature>
<feature type="helix" evidence="8">
    <location>
        <begin position="249"/>
        <end position="261"/>
    </location>
</feature>
<feature type="turn" evidence="8">
    <location>
        <begin position="262"/>
        <end position="265"/>
    </location>
</feature>
<feature type="helix" evidence="8">
    <location>
        <begin position="267"/>
        <end position="276"/>
    </location>
</feature>
<feature type="helix" evidence="8">
    <location>
        <begin position="282"/>
        <end position="285"/>
    </location>
</feature>
<feature type="strand" evidence="8">
    <location>
        <begin position="286"/>
        <end position="289"/>
    </location>
</feature>
<feature type="helix" evidence="8">
    <location>
        <begin position="290"/>
        <end position="305"/>
    </location>
</feature>
<feature type="helix" evidence="8">
    <location>
        <begin position="307"/>
        <end position="312"/>
    </location>
</feature>
<feature type="turn" evidence="8">
    <location>
        <begin position="313"/>
        <end position="317"/>
    </location>
</feature>
<feature type="helix" evidence="8">
    <location>
        <begin position="319"/>
        <end position="324"/>
    </location>
</feature>
<feature type="helix" evidence="8">
    <location>
        <begin position="326"/>
        <end position="328"/>
    </location>
</feature>
<feature type="helix" evidence="8">
    <location>
        <begin position="330"/>
        <end position="343"/>
    </location>
</feature>
<feature type="helix" evidence="8">
    <location>
        <begin position="346"/>
        <end position="349"/>
    </location>
</feature>
<feature type="helix" evidence="8">
    <location>
        <begin position="359"/>
        <end position="370"/>
    </location>
</feature>
<feature type="turn" evidence="8">
    <location>
        <begin position="372"/>
        <end position="375"/>
    </location>
</feature>
<feature type="helix" evidence="8">
    <location>
        <begin position="381"/>
        <end position="384"/>
    </location>
</feature>
<feature type="helix" evidence="8">
    <location>
        <begin position="388"/>
        <end position="401"/>
    </location>
</feature>
<evidence type="ECO:0000250" key="1">
    <source>
        <dbReference type="UniProtKB" id="P06159"/>
    </source>
</evidence>
<evidence type="ECO:0000250" key="2">
    <source>
        <dbReference type="UniProtKB" id="Q07097"/>
    </source>
</evidence>
<evidence type="ECO:0000256" key="3">
    <source>
        <dbReference type="SAM" id="MobiDB-lite"/>
    </source>
</evidence>
<evidence type="ECO:0000269" key="4">
    <source>
    </source>
</evidence>
<evidence type="ECO:0000269" key="5">
    <source ref="2"/>
</evidence>
<evidence type="ECO:0000305" key="6"/>
<evidence type="ECO:0007744" key="7">
    <source>
        <dbReference type="PDB" id="6M7D"/>
    </source>
</evidence>
<evidence type="ECO:0007829" key="8">
    <source>
        <dbReference type="PDB" id="6M7D"/>
    </source>
</evidence>
<dbReference type="EMBL" id="AB005795">
    <property type="protein sequence ID" value="BAA24384.1"/>
    <property type="molecule type" value="Genomic_RNA"/>
</dbReference>
<dbReference type="EMBL" id="AB005796">
    <property type="protein sequence ID" value="BAA24393.1"/>
    <property type="molecule type" value="Genomic_RNA"/>
</dbReference>
<dbReference type="RefSeq" id="NP_056871.1">
    <property type="nucleotide sequence ID" value="NC_001552.1"/>
</dbReference>
<dbReference type="PDB" id="4PG9">
    <property type="method" value="X-ray"/>
    <property type="resolution" value="2.40 A"/>
    <property type="chains" value="C=324-332"/>
</dbReference>
<dbReference type="PDB" id="4PGB">
    <property type="method" value="X-ray"/>
    <property type="resolution" value="2.80 A"/>
    <property type="chains" value="C/F=324-332"/>
</dbReference>
<dbReference type="PDB" id="4PGC">
    <property type="method" value="X-ray"/>
    <property type="resolution" value="2.30 A"/>
    <property type="chains" value="C/F=324-332"/>
</dbReference>
<dbReference type="PDB" id="4PGD">
    <property type="method" value="X-ray"/>
    <property type="resolution" value="2.70 A"/>
    <property type="chains" value="C=324-331"/>
</dbReference>
<dbReference type="PDB" id="4PGE">
    <property type="method" value="X-ray"/>
    <property type="resolution" value="2.00 A"/>
    <property type="chains" value="C=324-333"/>
</dbReference>
<dbReference type="PDB" id="6GB5">
    <property type="method" value="X-ray"/>
    <property type="resolution" value="2.30 A"/>
    <property type="chains" value="E/F=324-330"/>
</dbReference>
<dbReference type="PDB" id="6GB7">
    <property type="method" value="X-ray"/>
    <property type="resolution" value="2.15 A"/>
    <property type="chains" value="I/J/K/L=324-330"/>
</dbReference>
<dbReference type="PDB" id="6M7D">
    <property type="method" value="EM"/>
    <property type="resolution" value="2.90 A"/>
    <property type="chains" value="A=1-524"/>
</dbReference>
<dbReference type="PDBsum" id="4PG9"/>
<dbReference type="PDBsum" id="4PGB"/>
<dbReference type="PDBsum" id="4PGC"/>
<dbReference type="PDBsum" id="4PGD"/>
<dbReference type="PDBsum" id="4PGE"/>
<dbReference type="PDBsum" id="6GB5"/>
<dbReference type="PDBsum" id="6GB7"/>
<dbReference type="PDBsum" id="6M7D"/>
<dbReference type="EMDB" id="EMD-30129"/>
<dbReference type="SMR" id="O57286"/>
<dbReference type="GeneID" id="1489779"/>
<dbReference type="KEGG" id="vg:1489779"/>
<dbReference type="EvolutionaryTrace" id="O57286"/>
<dbReference type="Proteomes" id="UP000006563">
    <property type="component" value="Genome"/>
</dbReference>
<dbReference type="Proteomes" id="UP000007311">
    <property type="component" value="Segment"/>
</dbReference>
<dbReference type="GO" id="GO:0019029">
    <property type="term" value="C:helical viral capsid"/>
    <property type="evidence" value="ECO:0007669"/>
    <property type="project" value="UniProtKB-KW"/>
</dbReference>
<dbReference type="GO" id="GO:0030430">
    <property type="term" value="C:host cell cytoplasm"/>
    <property type="evidence" value="ECO:0007669"/>
    <property type="project" value="UniProtKB-SubCell"/>
</dbReference>
<dbReference type="GO" id="GO:1990904">
    <property type="term" value="C:ribonucleoprotein complex"/>
    <property type="evidence" value="ECO:0007669"/>
    <property type="project" value="UniProtKB-KW"/>
</dbReference>
<dbReference type="GO" id="GO:0019013">
    <property type="term" value="C:viral nucleocapsid"/>
    <property type="evidence" value="ECO:0007669"/>
    <property type="project" value="UniProtKB-KW"/>
</dbReference>
<dbReference type="GO" id="GO:0003723">
    <property type="term" value="F:RNA binding"/>
    <property type="evidence" value="ECO:0007669"/>
    <property type="project" value="UniProtKB-KW"/>
</dbReference>
<dbReference type="GO" id="GO:0005198">
    <property type="term" value="F:structural molecule activity"/>
    <property type="evidence" value="ECO:0007669"/>
    <property type="project" value="InterPro"/>
</dbReference>
<dbReference type="InterPro" id="IPR002021">
    <property type="entry name" value="Paramyx_ncap"/>
</dbReference>
<dbReference type="Pfam" id="PF00973">
    <property type="entry name" value="Paramyxo_ncap"/>
    <property type="match status" value="1"/>
</dbReference>
<accession>O57286</accession>